<reference key="1">
    <citation type="journal article" date="1997" name="Science">
        <title>The complete genome sequence of Escherichia coli K-12.</title>
        <authorList>
            <person name="Blattner F.R."/>
            <person name="Plunkett G. III"/>
            <person name="Bloch C.A."/>
            <person name="Perna N.T."/>
            <person name="Burland V."/>
            <person name="Riley M."/>
            <person name="Collado-Vides J."/>
            <person name="Glasner J.D."/>
            <person name="Rode C.K."/>
            <person name="Mayhew G.F."/>
            <person name="Gregor J."/>
            <person name="Davis N.W."/>
            <person name="Kirkpatrick H.A."/>
            <person name="Goeden M.A."/>
            <person name="Rose D.J."/>
            <person name="Mau B."/>
            <person name="Shao Y."/>
        </authorList>
    </citation>
    <scope>NUCLEOTIDE SEQUENCE [LARGE SCALE GENOMIC DNA]</scope>
    <source>
        <strain>K12 / MG1655 / ATCC 47076</strain>
    </source>
</reference>
<reference key="2">
    <citation type="journal article" date="2006" name="Mol. Syst. Biol.">
        <title>Highly accurate genome sequences of Escherichia coli K-12 strains MG1655 and W3110.</title>
        <authorList>
            <person name="Hayashi K."/>
            <person name="Morooka N."/>
            <person name="Yamamoto Y."/>
            <person name="Fujita K."/>
            <person name="Isono K."/>
            <person name="Choi S."/>
            <person name="Ohtsubo E."/>
            <person name="Baba T."/>
            <person name="Wanner B.L."/>
            <person name="Mori H."/>
            <person name="Horiuchi T."/>
        </authorList>
    </citation>
    <scope>NUCLEOTIDE SEQUENCE [LARGE SCALE GENOMIC DNA]</scope>
    <source>
        <strain>K12 / W3110 / ATCC 27325 / DSM 5911</strain>
    </source>
</reference>
<reference key="3">
    <citation type="journal article" date="2000" name="J. Bacteriol.">
        <title>Purine catabolism in Escherichia coli and function of xanthine dehydrogenase in purine salvage.</title>
        <authorList>
            <person name="Xi H."/>
            <person name="Schneider B.L."/>
            <person name="Reitzer L."/>
        </authorList>
    </citation>
    <scope>FUNCTION</scope>
    <source>
        <strain>K12 / W3110 / ATCC 27325 / DSM 5911</strain>
    </source>
</reference>
<accession>Q46799</accession>
<accession>Q2M9X4</accession>
<evidence type="ECO:0000250" key="1"/>
<evidence type="ECO:0000269" key="2">
    <source>
    </source>
</evidence>
<evidence type="ECO:0000305" key="3"/>
<sequence length="752" mass="81321">MRVDAIAKVTGRARYTDDYVMAGMCYAKYVRSPIAHGYAVSINDEQARSLPGVLAIFTWEDVPDIPFATAGHAWTLDENKRDTADRALLTRHVRHHGDAVAIVVARDELTAEKAAQLVSIEWQELPVITTPEAALAEDAAPIHNGGNLLKQSTMSTGNVQQTIDAADYQVQGHYQTPVIQHCHMESVTSLAWMEDDSRITIVSSTQIPHIVRRVVGQALDIPWSCVRVIKPFVGGGFGNKQDVLEEPMAAFLTSKLGGIPVKVSLSREECFLATRTRHAFTIDGQMGVNRDGTLKGYSLDVLSNTGAYASHGHSIASAGGNKVAYLYPRCAYAYSSKTCYTNLPSAGAMRGYGAPQVVFAVESMLDDAATALGIDPVEIRLRNAAREGDANPLTGKRIYSAGLPECLEKGRKIFEWEKRRAECQNQQGNLRRGVGVACFSYTSNTWPVGVEIAGARLLMNQDGTINVQSGATEIGQGADTVFSQMVAETVGVPVSDVRVISTQDTDVTPFDPGAFASRQSYVAAPALRSAALLLKEKIIAHAAVMLHQSAMNLTLIKGHIVLVERPEEPLMSLKDLAMDAFYHPERGGQLSAESSIKTTTNPPAFGCTFVDLTVDIALCKVTINRILNVHDSGHILNPLLAEGQVHGGMGMGIGWALFEEMIIDAKSGVVRNPNLLDYKMPTMPDLPQLESAFVEINEPQSAYGHKSLGEPPIIPVAAAIRNAVKMATGVAINTLPLTPKRLYEEFHLAGLI</sequence>
<gene>
    <name type="primary">xdhA</name>
    <name type="synonym">ygeS</name>
    <name type="ordered locus">b2866</name>
    <name type="ordered locus">JW5462</name>
</gene>
<feature type="chain" id="PRO_0000166088" description="Putative xanthine dehydrogenase molybdenum-binding subunit XdhA">
    <location>
        <begin position="1"/>
        <end position="752"/>
    </location>
</feature>
<feature type="binding site" evidence="1">
    <location>
        <position position="206"/>
    </location>
    <ligand>
        <name>Mo-molybdopterin</name>
        <dbReference type="ChEBI" id="CHEBI:71302"/>
    </ligand>
    <ligandPart>
        <name>Mo</name>
        <dbReference type="ChEBI" id="CHEBI:28685"/>
    </ligandPart>
</feature>
<feature type="binding site" evidence="1">
    <location>
        <position position="237"/>
    </location>
    <ligand>
        <name>Mo-molybdopterin</name>
        <dbReference type="ChEBI" id="CHEBI:71302"/>
    </ligand>
    <ligandPart>
        <name>Mo</name>
        <dbReference type="ChEBI" id="CHEBI:28685"/>
    </ligandPart>
</feature>
<feature type="binding site" evidence="1">
    <location>
        <position position="350"/>
    </location>
    <ligand>
        <name>Mo-molybdopterin</name>
        <dbReference type="ChEBI" id="CHEBI:71302"/>
    </ligand>
    <ligandPart>
        <name>Mo</name>
        <dbReference type="ChEBI" id="CHEBI:28685"/>
    </ligandPart>
</feature>
<feature type="binding site" evidence="1">
    <location>
        <position position="516"/>
    </location>
    <ligand>
        <name>Mo-molybdopterin</name>
        <dbReference type="ChEBI" id="CHEBI:71302"/>
    </ligand>
    <ligandPart>
        <name>Mo</name>
        <dbReference type="ChEBI" id="CHEBI:28685"/>
    </ligandPart>
</feature>
<keyword id="KW-0479">Metal-binding</keyword>
<keyword id="KW-0500">Molybdenum</keyword>
<keyword id="KW-0520">NAD</keyword>
<keyword id="KW-0560">Oxidoreductase</keyword>
<keyword id="KW-0659">Purine metabolism</keyword>
<keyword id="KW-0660">Purine salvage</keyword>
<keyword id="KW-1185">Reference proteome</keyword>
<proteinExistence type="evidence at transcript level"/>
<organism>
    <name type="scientific">Escherichia coli (strain K12)</name>
    <dbReference type="NCBI Taxonomy" id="83333"/>
    <lineage>
        <taxon>Bacteria</taxon>
        <taxon>Pseudomonadati</taxon>
        <taxon>Pseudomonadota</taxon>
        <taxon>Gammaproteobacteria</taxon>
        <taxon>Enterobacterales</taxon>
        <taxon>Enterobacteriaceae</taxon>
        <taxon>Escherichia</taxon>
    </lineage>
</organism>
<protein>
    <recommendedName>
        <fullName>Putative xanthine dehydrogenase molybdenum-binding subunit XdhA</fullName>
        <ecNumber>1.17.1.4</ecNumber>
    </recommendedName>
</protein>
<dbReference type="EC" id="1.17.1.4"/>
<dbReference type="EMBL" id="U28375">
    <property type="protein sequence ID" value="AAA83047.1"/>
    <property type="molecule type" value="Genomic_DNA"/>
</dbReference>
<dbReference type="EMBL" id="U00096">
    <property type="protein sequence ID" value="AAC75904.1"/>
    <property type="molecule type" value="Genomic_DNA"/>
</dbReference>
<dbReference type="EMBL" id="AP009048">
    <property type="protein sequence ID" value="BAE76932.1"/>
    <property type="molecule type" value="Genomic_DNA"/>
</dbReference>
<dbReference type="PIR" id="B65070">
    <property type="entry name" value="B65070"/>
</dbReference>
<dbReference type="RefSeq" id="NP_417342.1">
    <property type="nucleotide sequence ID" value="NC_000913.3"/>
</dbReference>
<dbReference type="SMR" id="Q46799"/>
<dbReference type="BioGRID" id="4262319">
    <property type="interactions" value="18"/>
</dbReference>
<dbReference type="ComplexPortal" id="CPX-5122">
    <property type="entry name" value="XdhABC xanthine dehydrogenase complex"/>
</dbReference>
<dbReference type="FunCoup" id="Q46799">
    <property type="interactions" value="480"/>
</dbReference>
<dbReference type="IntAct" id="Q46799">
    <property type="interactions" value="1"/>
</dbReference>
<dbReference type="STRING" id="511145.b2866"/>
<dbReference type="jPOST" id="Q46799"/>
<dbReference type="PaxDb" id="511145-b2866"/>
<dbReference type="EnsemblBacteria" id="AAC75904">
    <property type="protein sequence ID" value="AAC75904"/>
    <property type="gene ID" value="b2866"/>
</dbReference>
<dbReference type="GeneID" id="947116"/>
<dbReference type="KEGG" id="ecj:JW5462"/>
<dbReference type="KEGG" id="eco:b2866"/>
<dbReference type="PATRIC" id="fig|511145.12.peg.2959"/>
<dbReference type="EchoBASE" id="EB2861"/>
<dbReference type="eggNOG" id="COG1529">
    <property type="taxonomic scope" value="Bacteria"/>
</dbReference>
<dbReference type="HOGENOM" id="CLU_001681_2_1_6"/>
<dbReference type="InParanoid" id="Q46799"/>
<dbReference type="OMA" id="SMSEAPY"/>
<dbReference type="PhylomeDB" id="Q46799"/>
<dbReference type="BioCyc" id="EcoCyc:G7485-MONOMER"/>
<dbReference type="BioCyc" id="MetaCyc:G7485-MONOMER"/>
<dbReference type="BRENDA" id="1.17.1.4">
    <property type="organism ID" value="2026"/>
</dbReference>
<dbReference type="UniPathway" id="UPA00604">
    <property type="reaction ID" value="UER00661"/>
</dbReference>
<dbReference type="UniPathway" id="UPA00604">
    <property type="reaction ID" value="UER00662"/>
</dbReference>
<dbReference type="PRO" id="PR:Q46799"/>
<dbReference type="Proteomes" id="UP000000625">
    <property type="component" value="Chromosome"/>
</dbReference>
<dbReference type="GO" id="GO:0005737">
    <property type="term" value="C:cytoplasm"/>
    <property type="evidence" value="ECO:0000303"/>
    <property type="project" value="ComplexPortal"/>
</dbReference>
<dbReference type="GO" id="GO:0002197">
    <property type="term" value="C:xanthine dehydrogenase complex"/>
    <property type="evidence" value="ECO:0000303"/>
    <property type="project" value="ComplexPortal"/>
</dbReference>
<dbReference type="GO" id="GO:0005506">
    <property type="term" value="F:iron ion binding"/>
    <property type="evidence" value="ECO:0007669"/>
    <property type="project" value="InterPro"/>
</dbReference>
<dbReference type="GO" id="GO:0016491">
    <property type="term" value="F:oxidoreductase activity"/>
    <property type="evidence" value="ECO:0000315"/>
    <property type="project" value="EcoliWiki"/>
</dbReference>
<dbReference type="GO" id="GO:0004854">
    <property type="term" value="F:xanthine dehydrogenase activity"/>
    <property type="evidence" value="ECO:0000269"/>
    <property type="project" value="EcoCyc"/>
</dbReference>
<dbReference type="GO" id="GO:0009114">
    <property type="term" value="P:hypoxanthine catabolic process"/>
    <property type="evidence" value="ECO:0000303"/>
    <property type="project" value="ComplexPortal"/>
</dbReference>
<dbReference type="GO" id="GO:0006166">
    <property type="term" value="P:purine ribonucleoside salvage"/>
    <property type="evidence" value="ECO:0000303"/>
    <property type="project" value="ComplexPortal"/>
</dbReference>
<dbReference type="Gene3D" id="3.90.1170.50">
    <property type="entry name" value="Aldehyde oxidase/xanthine dehydrogenase, a/b hammerhead"/>
    <property type="match status" value="1"/>
</dbReference>
<dbReference type="Gene3D" id="3.30.365.10">
    <property type="entry name" value="Aldehyde oxidase/xanthine dehydrogenase, molybdopterin binding domain"/>
    <property type="match status" value="4"/>
</dbReference>
<dbReference type="InterPro" id="IPR000674">
    <property type="entry name" value="Ald_Oxase/Xan_DH_a/b"/>
</dbReference>
<dbReference type="InterPro" id="IPR036856">
    <property type="entry name" value="Ald_Oxase/Xan_DH_a/b_sf"/>
</dbReference>
<dbReference type="InterPro" id="IPR016208">
    <property type="entry name" value="Ald_Oxase/xanthine_DH-like"/>
</dbReference>
<dbReference type="InterPro" id="IPR008274">
    <property type="entry name" value="AldOxase/xan_DH_MoCoBD1"/>
</dbReference>
<dbReference type="InterPro" id="IPR046867">
    <property type="entry name" value="AldOxase/xan_DH_MoCoBD2"/>
</dbReference>
<dbReference type="InterPro" id="IPR037165">
    <property type="entry name" value="AldOxase/xan_DH_Mopterin-bd_sf"/>
</dbReference>
<dbReference type="InterPro" id="IPR050028">
    <property type="entry name" value="XdhA_XDHase"/>
</dbReference>
<dbReference type="NCBIfam" id="NF007426">
    <property type="entry name" value="PRK09970.1"/>
    <property type="match status" value="1"/>
</dbReference>
<dbReference type="NCBIfam" id="NF043082">
    <property type="entry name" value="XdhA_XDHase"/>
    <property type="match status" value="1"/>
</dbReference>
<dbReference type="PANTHER" id="PTHR11908:SF132">
    <property type="entry name" value="ALDEHYDE OXIDASE 1-RELATED"/>
    <property type="match status" value="1"/>
</dbReference>
<dbReference type="PANTHER" id="PTHR11908">
    <property type="entry name" value="XANTHINE DEHYDROGENASE"/>
    <property type="match status" value="1"/>
</dbReference>
<dbReference type="Pfam" id="PF01315">
    <property type="entry name" value="Ald_Xan_dh_C"/>
    <property type="match status" value="1"/>
</dbReference>
<dbReference type="Pfam" id="PF02738">
    <property type="entry name" value="MoCoBD_1"/>
    <property type="match status" value="1"/>
</dbReference>
<dbReference type="Pfam" id="PF20256">
    <property type="entry name" value="MoCoBD_2"/>
    <property type="match status" value="1"/>
</dbReference>
<dbReference type="SMART" id="SM01008">
    <property type="entry name" value="Ald_Xan_dh_C"/>
    <property type="match status" value="1"/>
</dbReference>
<dbReference type="SUPFAM" id="SSF54665">
    <property type="entry name" value="CO dehydrogenase molybdoprotein N-domain-like"/>
    <property type="match status" value="1"/>
</dbReference>
<dbReference type="SUPFAM" id="SSF56003">
    <property type="entry name" value="Molybdenum cofactor-binding domain"/>
    <property type="match status" value="1"/>
</dbReference>
<name>XDHA_ECOLI</name>
<comment type="function">
    <text evidence="2">Presumed to be a dehydrogenase, but possibly an oxidase. Participates in limited purine salvage (requires aspartate) but does not support aerobic growth on purines as the sole carbon source (purine catabolism). Deletion results in increased adenine sensitivity, suggesting that this protein contributes to the conversion of adenine to guanine nucleotides during purine salvage.</text>
</comment>
<comment type="catalytic activity">
    <reaction>
        <text>xanthine + NAD(+) + H2O = urate + NADH + H(+)</text>
        <dbReference type="Rhea" id="RHEA:16669"/>
        <dbReference type="ChEBI" id="CHEBI:15377"/>
        <dbReference type="ChEBI" id="CHEBI:15378"/>
        <dbReference type="ChEBI" id="CHEBI:17712"/>
        <dbReference type="ChEBI" id="CHEBI:17775"/>
        <dbReference type="ChEBI" id="CHEBI:57540"/>
        <dbReference type="ChEBI" id="CHEBI:57945"/>
        <dbReference type="EC" id="1.17.1.4"/>
    </reaction>
</comment>
<comment type="catalytic activity">
    <reaction>
        <text>hypoxanthine + NAD(+) + H2O = xanthine + NADH + H(+)</text>
        <dbReference type="Rhea" id="RHEA:24670"/>
        <dbReference type="ChEBI" id="CHEBI:15377"/>
        <dbReference type="ChEBI" id="CHEBI:15378"/>
        <dbReference type="ChEBI" id="CHEBI:17368"/>
        <dbReference type="ChEBI" id="CHEBI:17712"/>
        <dbReference type="ChEBI" id="CHEBI:57540"/>
        <dbReference type="ChEBI" id="CHEBI:57945"/>
        <dbReference type="EC" id="1.17.1.4"/>
    </reaction>
</comment>
<comment type="cofactor">
    <cofactor evidence="1">
        <name>Mo-molybdopterin</name>
        <dbReference type="ChEBI" id="CHEBI:71302"/>
    </cofactor>
    <text evidence="1">Binds 1 Mo-molybdopterin (Mo-MPT) cofactor per subunit.</text>
</comment>
<comment type="pathway">
    <text>Purine metabolism; hypoxanthine degradation; urate from hypoxanthine: step 1/2.</text>
</comment>
<comment type="pathway">
    <text>Purine metabolism; hypoxanthine degradation; urate from hypoxanthine: step 2/2.</text>
</comment>
<comment type="subunit">
    <text evidence="3">Heterotrimer of XdhA, XdhB and XdhC.</text>
</comment>
<comment type="induction">
    <text>Is not solely regulated by nitrogen limitation.</text>
</comment>
<comment type="similarity">
    <text evidence="3">Belongs to the xanthine dehydrogenase family.</text>
</comment>